<keyword id="KW-1185">Reference proteome</keyword>
<organismHost>
    <name type="scientific">Ictaluridae</name>
    <name type="common">bullhead catfishes</name>
    <dbReference type="NCBI Taxonomy" id="7996"/>
</organismHost>
<name>VG32_ICHVA</name>
<feature type="chain" id="PRO_0000222114" description="Uncharacterized protein ORF32">
    <location>
        <begin position="1"/>
        <end position="134"/>
    </location>
</feature>
<protein>
    <recommendedName>
        <fullName>Uncharacterized protein ORF32</fullName>
    </recommendedName>
</protein>
<dbReference type="EMBL" id="M75136">
    <property type="protein sequence ID" value="AAA88135.1"/>
    <property type="molecule type" value="Genomic_DNA"/>
</dbReference>
<dbReference type="PIR" id="F36789">
    <property type="entry name" value="F36789"/>
</dbReference>
<dbReference type="RefSeq" id="NP_041123.1">
    <property type="nucleotide sequence ID" value="NC_001493.2"/>
</dbReference>
<dbReference type="GeneID" id="1488385"/>
<dbReference type="KEGG" id="vg:1488385"/>
<dbReference type="Proteomes" id="UP000007643">
    <property type="component" value="Segment"/>
</dbReference>
<proteinExistence type="predicted"/>
<accession>Q00100</accession>
<organism>
    <name type="scientific">Ictalurid herpesvirus 1 (strain Auburn)</name>
    <name type="common">IcHV-1</name>
    <name type="synonym">Channel catfish herpesvirus</name>
    <dbReference type="NCBI Taxonomy" id="766178"/>
    <lineage>
        <taxon>Viruses</taxon>
        <taxon>Duplodnaviria</taxon>
        <taxon>Heunggongvirae</taxon>
        <taxon>Peploviricota</taxon>
        <taxon>Herviviricetes</taxon>
        <taxon>Herpesvirales</taxon>
        <taxon>Alloherpesviridae</taxon>
        <taxon>Ictavirus</taxon>
        <taxon>Ictavirus ictaluridallo1</taxon>
        <taxon>Ictalurid herpesvirus 1</taxon>
    </lineage>
</organism>
<reference key="1">
    <citation type="journal article" date="1992" name="Virology">
        <title>Channel catfish virus: a new type of herpesvirus.</title>
        <authorList>
            <person name="Davison A.J."/>
        </authorList>
    </citation>
    <scope>NUCLEOTIDE SEQUENCE [LARGE SCALE GENOMIC DNA]</scope>
</reference>
<sequence length="134" mass="14131">MRGATTDDSITSSVRALPAVVPGSGLFLPMVLHVSSLLSLDQLMGSKSDDRPRLIGIGVSVTRVTPDPTRPAMAHTPSVFLGTRSDLIMFSPHNLKNSSVLQPGNDLSSFLLSFSSSVPRNPDPNFSASIAIVS</sequence>
<gene>
    <name type="primary">ORF32</name>
</gene>